<accession>Q68WX4</accession>
<proteinExistence type="predicted"/>
<dbReference type="EMBL" id="AE017197">
    <property type="protein sequence ID" value="AAU03868.1"/>
    <property type="molecule type" value="Genomic_DNA"/>
</dbReference>
<dbReference type="RefSeq" id="WP_011190852.1">
    <property type="nucleotide sequence ID" value="NC_006142.1"/>
</dbReference>
<dbReference type="KEGG" id="rty:RT0391"/>
<dbReference type="eggNOG" id="COG2887">
    <property type="taxonomic scope" value="Bacteria"/>
</dbReference>
<dbReference type="HOGENOM" id="CLU_337988_0_0_5"/>
<dbReference type="OrthoDB" id="9780606at2"/>
<dbReference type="Proteomes" id="UP000000604">
    <property type="component" value="Chromosome"/>
</dbReference>
<dbReference type="Gene3D" id="3.90.320.10">
    <property type="match status" value="1"/>
</dbReference>
<dbReference type="InterPro" id="IPR027417">
    <property type="entry name" value="P-loop_NTPase"/>
</dbReference>
<dbReference type="InterPro" id="IPR011604">
    <property type="entry name" value="PDDEXK-like_dom_sf"/>
</dbReference>
<dbReference type="InterPro" id="IPR038726">
    <property type="entry name" value="PDDEXK_AddAB-type"/>
</dbReference>
<dbReference type="InterPro" id="IPR011335">
    <property type="entry name" value="Restrct_endonuc-II-like"/>
</dbReference>
<dbReference type="Pfam" id="PF12705">
    <property type="entry name" value="PDDEXK_1"/>
    <property type="match status" value="1"/>
</dbReference>
<dbReference type="SUPFAM" id="SSF52540">
    <property type="entry name" value="P-loop containing nucleoside triphosphate hydrolases"/>
    <property type="match status" value="1"/>
</dbReference>
<dbReference type="SUPFAM" id="SSF52980">
    <property type="entry name" value="Restriction endonuclease-like"/>
    <property type="match status" value="1"/>
</dbReference>
<feature type="chain" id="PRO_0000280808" description="Uncharacterized protein RT0391">
    <location>
        <begin position="1"/>
        <end position="864"/>
    </location>
</feature>
<gene>
    <name type="ordered locus">RT0391</name>
</gene>
<reference key="1">
    <citation type="journal article" date="2004" name="J. Bacteriol.">
        <title>Complete genome sequence of Rickettsia typhi and comparison with sequences of other Rickettsiae.</title>
        <authorList>
            <person name="McLeod M.P."/>
            <person name="Qin X."/>
            <person name="Karpathy S.E."/>
            <person name="Gioia J."/>
            <person name="Highlander S.K."/>
            <person name="Fox G.E."/>
            <person name="McNeill T.Z."/>
            <person name="Jiang H."/>
            <person name="Muzny D."/>
            <person name="Jacob L.S."/>
            <person name="Hawes A.C."/>
            <person name="Sodergren E."/>
            <person name="Gill R."/>
            <person name="Hume J."/>
            <person name="Morgan M."/>
            <person name="Fan G."/>
            <person name="Amin A.G."/>
            <person name="Gibbs R.A."/>
            <person name="Hong C."/>
            <person name="Yu X.-J."/>
            <person name="Walker D.H."/>
            <person name="Weinstock G.M."/>
        </authorList>
    </citation>
    <scope>NUCLEOTIDE SEQUENCE [LARGE SCALE GENOMIC DNA]</scope>
    <source>
        <strain>ATCC VR-144 / Wilmington</strain>
    </source>
</reference>
<sequence>MIARYSFLQNFAEYIIDKLKKGIEVQIILPNNLLCLKLKQILIDKYKIKLPIIIPFNAIFFKKNESDYISKIEELFILSSIITEYKELPFNLEESLKSAEILRKLFNDLIINNIDIKLIEVYNNSNYWQKIYKFLEICFLKWKKAISLTQKYTKTIHEFNILQEEIIKIKKRDKRIILAGIFKPNVFFKKFEEELKDYIIHYNPSYNYISNNISYSEPNNIYEEAKQIAYICELNKDKHIAIVTNDNKLKKVYCNFLDQKYSDLLGNDLRRTNIGELLTAIIKIICNNFDLKLLFLLLKNPLINCHSVQKLELMLSNQNRFISSPKYLLQLQFENEELKEYCANLIDILFTNNPHNITGILTLTQEIAEKLLPTIWEKEEGEVLIEFLTNLISYSKHINLMNKKDFPKIFSFLLSNIKHYKNTDSSSIIIGQPEDLVLCRFDLIILPHFNNEHWSPNAKPHPLLSKKALQILNIDYNDAITTMLYTDYFNLLLQNKQIVILNAKKYNGKLSTSCNLFLRLQLKHVIPWFDPKLLTPATNSLDIKSQDDHKLTTISHSFPSVLSVTDIESLIRNPYGFYAKKILGLYKKDNIWEEPKISDFGNFIHKVLEKYSKNYDKQYVCLNLLDKQAALINIGNHILYSTILPAYTKKIWQIKLTAFSKTFILFDIERRKNCKEIYFEIKGELRLNIAGQNIKIIGIADRIEVSKSNDITILDYKTGTIPTKKEIEFGLSPQLIIECLMLLENGFNIKSFSNLETSQLSNIHIGRDTVICSRAQVVNPSYLKNYKSSCINKKLTIAYVRITSTEPYIQTTEIDLNIETLHKHKAGLIRLLEYYVTNKSFSYDFNLSNYNDYRHLTRCYYINS</sequence>
<organism>
    <name type="scientific">Rickettsia typhi (strain ATCC VR-144 / Wilmington)</name>
    <dbReference type="NCBI Taxonomy" id="257363"/>
    <lineage>
        <taxon>Bacteria</taxon>
        <taxon>Pseudomonadati</taxon>
        <taxon>Pseudomonadota</taxon>
        <taxon>Alphaproteobacteria</taxon>
        <taxon>Rickettsiales</taxon>
        <taxon>Rickettsiaceae</taxon>
        <taxon>Rickettsieae</taxon>
        <taxon>Rickettsia</taxon>
        <taxon>typhus group</taxon>
    </lineage>
</organism>
<protein>
    <recommendedName>
        <fullName>Uncharacterized protein RT0391</fullName>
    </recommendedName>
</protein>
<name>Y391_RICTY</name>